<accession>C1CDH7</accession>
<feature type="chain" id="PRO_1000148256" description="Phosphopentomutase">
    <location>
        <begin position="1"/>
        <end position="403"/>
    </location>
</feature>
<feature type="binding site" evidence="1">
    <location>
        <position position="13"/>
    </location>
    <ligand>
        <name>Mn(2+)</name>
        <dbReference type="ChEBI" id="CHEBI:29035"/>
        <label>1</label>
    </ligand>
</feature>
<feature type="binding site" evidence="1">
    <location>
        <position position="298"/>
    </location>
    <ligand>
        <name>Mn(2+)</name>
        <dbReference type="ChEBI" id="CHEBI:29035"/>
        <label>2</label>
    </ligand>
</feature>
<feature type="binding site" evidence="1">
    <location>
        <position position="303"/>
    </location>
    <ligand>
        <name>Mn(2+)</name>
        <dbReference type="ChEBI" id="CHEBI:29035"/>
        <label>2</label>
    </ligand>
</feature>
<feature type="binding site" evidence="1">
    <location>
        <position position="339"/>
    </location>
    <ligand>
        <name>Mn(2+)</name>
        <dbReference type="ChEBI" id="CHEBI:29035"/>
        <label>1</label>
    </ligand>
</feature>
<feature type="binding site" evidence="1">
    <location>
        <position position="340"/>
    </location>
    <ligand>
        <name>Mn(2+)</name>
        <dbReference type="ChEBI" id="CHEBI:29035"/>
        <label>1</label>
    </ligand>
</feature>
<feature type="binding site" evidence="1">
    <location>
        <position position="351"/>
    </location>
    <ligand>
        <name>Mn(2+)</name>
        <dbReference type="ChEBI" id="CHEBI:29035"/>
        <label>2</label>
    </ligand>
</feature>
<gene>
    <name evidence="1" type="primary">deoB</name>
    <name type="ordered locus">SPJ_0767</name>
</gene>
<proteinExistence type="inferred from homology"/>
<comment type="function">
    <text evidence="1">Isomerase that catalyzes the conversion of deoxy-ribose 1-phosphate (dRib-1-P) and ribose 1-phosphate (Rib-1-P) to deoxy-ribose 5-phosphate (dRib-5-P) and ribose 5-phosphate (Rib-5-P), respectively.</text>
</comment>
<comment type="catalytic activity">
    <reaction evidence="1">
        <text>2-deoxy-alpha-D-ribose 1-phosphate = 2-deoxy-D-ribose 5-phosphate</text>
        <dbReference type="Rhea" id="RHEA:27658"/>
        <dbReference type="ChEBI" id="CHEBI:57259"/>
        <dbReference type="ChEBI" id="CHEBI:62877"/>
        <dbReference type="EC" id="5.4.2.7"/>
    </reaction>
</comment>
<comment type="catalytic activity">
    <reaction evidence="1">
        <text>alpha-D-ribose 1-phosphate = D-ribose 5-phosphate</text>
        <dbReference type="Rhea" id="RHEA:18793"/>
        <dbReference type="ChEBI" id="CHEBI:57720"/>
        <dbReference type="ChEBI" id="CHEBI:78346"/>
        <dbReference type="EC" id="5.4.2.7"/>
    </reaction>
</comment>
<comment type="cofactor">
    <cofactor evidence="1">
        <name>Mn(2+)</name>
        <dbReference type="ChEBI" id="CHEBI:29035"/>
    </cofactor>
    <text evidence="1">Binds 2 manganese ions.</text>
</comment>
<comment type="pathway">
    <text evidence="1">Carbohydrate degradation; 2-deoxy-D-ribose 1-phosphate degradation; D-glyceraldehyde 3-phosphate and acetaldehyde from 2-deoxy-alpha-D-ribose 1-phosphate: step 1/2.</text>
</comment>
<comment type="subcellular location">
    <subcellularLocation>
        <location evidence="1">Cytoplasm</location>
    </subcellularLocation>
</comment>
<comment type="similarity">
    <text evidence="1">Belongs to the phosphopentomutase family.</text>
</comment>
<keyword id="KW-0963">Cytoplasm</keyword>
<keyword id="KW-0413">Isomerase</keyword>
<keyword id="KW-0464">Manganese</keyword>
<keyword id="KW-0479">Metal-binding</keyword>
<dbReference type="EC" id="5.4.2.7" evidence="1"/>
<dbReference type="EMBL" id="CP000919">
    <property type="protein sequence ID" value="ACO20008.1"/>
    <property type="molecule type" value="Genomic_DNA"/>
</dbReference>
<dbReference type="RefSeq" id="WP_000033102.1">
    <property type="nucleotide sequence ID" value="NC_012466.1"/>
</dbReference>
<dbReference type="SMR" id="C1CDH7"/>
<dbReference type="KEGG" id="sjj:SPJ_0767"/>
<dbReference type="HOGENOM" id="CLU_053861_0_0_9"/>
<dbReference type="UniPathway" id="UPA00002">
    <property type="reaction ID" value="UER00467"/>
</dbReference>
<dbReference type="Proteomes" id="UP000002206">
    <property type="component" value="Chromosome"/>
</dbReference>
<dbReference type="GO" id="GO:0005829">
    <property type="term" value="C:cytosol"/>
    <property type="evidence" value="ECO:0007669"/>
    <property type="project" value="TreeGrafter"/>
</dbReference>
<dbReference type="GO" id="GO:0000287">
    <property type="term" value="F:magnesium ion binding"/>
    <property type="evidence" value="ECO:0007669"/>
    <property type="project" value="InterPro"/>
</dbReference>
<dbReference type="GO" id="GO:0030145">
    <property type="term" value="F:manganese ion binding"/>
    <property type="evidence" value="ECO:0007669"/>
    <property type="project" value="UniProtKB-UniRule"/>
</dbReference>
<dbReference type="GO" id="GO:0008973">
    <property type="term" value="F:phosphopentomutase activity"/>
    <property type="evidence" value="ECO:0007669"/>
    <property type="project" value="UniProtKB-UniRule"/>
</dbReference>
<dbReference type="GO" id="GO:0006018">
    <property type="term" value="P:2-deoxyribose 1-phosphate catabolic process"/>
    <property type="evidence" value="ECO:0007669"/>
    <property type="project" value="UniProtKB-UniRule"/>
</dbReference>
<dbReference type="GO" id="GO:0006015">
    <property type="term" value="P:5-phosphoribose 1-diphosphate biosynthetic process"/>
    <property type="evidence" value="ECO:0007669"/>
    <property type="project" value="UniProtKB-UniPathway"/>
</dbReference>
<dbReference type="GO" id="GO:0043094">
    <property type="term" value="P:metabolic compound salvage"/>
    <property type="evidence" value="ECO:0007669"/>
    <property type="project" value="InterPro"/>
</dbReference>
<dbReference type="GO" id="GO:0009117">
    <property type="term" value="P:nucleotide metabolic process"/>
    <property type="evidence" value="ECO:0007669"/>
    <property type="project" value="InterPro"/>
</dbReference>
<dbReference type="CDD" id="cd16009">
    <property type="entry name" value="PPM"/>
    <property type="match status" value="1"/>
</dbReference>
<dbReference type="FunFam" id="3.30.70.1250:FF:000001">
    <property type="entry name" value="Phosphopentomutase"/>
    <property type="match status" value="1"/>
</dbReference>
<dbReference type="Gene3D" id="3.40.720.10">
    <property type="entry name" value="Alkaline Phosphatase, subunit A"/>
    <property type="match status" value="1"/>
</dbReference>
<dbReference type="Gene3D" id="3.30.70.1250">
    <property type="entry name" value="Phosphopentomutase"/>
    <property type="match status" value="1"/>
</dbReference>
<dbReference type="HAMAP" id="MF_00740">
    <property type="entry name" value="Phosphopentomut"/>
    <property type="match status" value="1"/>
</dbReference>
<dbReference type="InterPro" id="IPR017850">
    <property type="entry name" value="Alkaline_phosphatase_core_sf"/>
</dbReference>
<dbReference type="InterPro" id="IPR010045">
    <property type="entry name" value="DeoB"/>
</dbReference>
<dbReference type="InterPro" id="IPR006124">
    <property type="entry name" value="Metalloenzyme"/>
</dbReference>
<dbReference type="InterPro" id="IPR024052">
    <property type="entry name" value="Phosphopentomutase_DeoB_cap_sf"/>
</dbReference>
<dbReference type="NCBIfam" id="TIGR01696">
    <property type="entry name" value="deoB"/>
    <property type="match status" value="1"/>
</dbReference>
<dbReference type="NCBIfam" id="NF003766">
    <property type="entry name" value="PRK05362.1"/>
    <property type="match status" value="1"/>
</dbReference>
<dbReference type="PANTHER" id="PTHR21110">
    <property type="entry name" value="PHOSPHOPENTOMUTASE"/>
    <property type="match status" value="1"/>
</dbReference>
<dbReference type="PANTHER" id="PTHR21110:SF0">
    <property type="entry name" value="PHOSPHOPENTOMUTASE"/>
    <property type="match status" value="1"/>
</dbReference>
<dbReference type="Pfam" id="PF01676">
    <property type="entry name" value="Metalloenzyme"/>
    <property type="match status" value="1"/>
</dbReference>
<dbReference type="PIRSF" id="PIRSF001491">
    <property type="entry name" value="Ppentomutase"/>
    <property type="match status" value="1"/>
</dbReference>
<dbReference type="SUPFAM" id="SSF53649">
    <property type="entry name" value="Alkaline phosphatase-like"/>
    <property type="match status" value="1"/>
</dbReference>
<dbReference type="SUPFAM" id="SSF143856">
    <property type="entry name" value="DeoB insert domain-like"/>
    <property type="match status" value="1"/>
</dbReference>
<evidence type="ECO:0000255" key="1">
    <source>
        <dbReference type="HAMAP-Rule" id="MF_00740"/>
    </source>
</evidence>
<organism>
    <name type="scientific">Streptococcus pneumoniae (strain JJA)</name>
    <dbReference type="NCBI Taxonomy" id="488222"/>
    <lineage>
        <taxon>Bacteria</taxon>
        <taxon>Bacillati</taxon>
        <taxon>Bacillota</taxon>
        <taxon>Bacilli</taxon>
        <taxon>Lactobacillales</taxon>
        <taxon>Streptococcaceae</taxon>
        <taxon>Streptococcus</taxon>
    </lineage>
</organism>
<protein>
    <recommendedName>
        <fullName evidence="1">Phosphopentomutase</fullName>
        <ecNumber evidence="1">5.4.2.7</ecNumber>
    </recommendedName>
    <alternativeName>
        <fullName evidence="1">Phosphodeoxyribomutase</fullName>
    </alternativeName>
</protein>
<sequence length="403" mass="44077">MSKFNRIHLVVLDSVGIGAAPDANNFVNAGVPDGASDTLGHISKTVGLNVPNMAKIGLGNIPRETPLKTVAAESNPTGYATKLEEVSLGKDTMTGHWEIMGLNITEPFDTFWNGFPEEILTKIEEFSGRKVIREANKPYSGTAVIDDFGPRQMETGELIIYTSADPVLQIAAHEDIIPLDELYRICEYARSITLERPALLGRIIARPYVGEPGNFTRTANRRDLAVSPFSPTVLDKLNEAGIDTYAVGKINDIFNGAGINHDMGHNKSNSHGIDTLLKTMGLAEFEKGFSFTNLVDFDALYGHRRNAHGYRDCLHEFDERLPEIIAAMRENDLLLITADHGNDPTYAGTDHTREYIPLLAYSPAFKGNGLIPVGHFADISATVADNFGVETAMIGESFLDKLV</sequence>
<reference key="1">
    <citation type="journal article" date="2010" name="Genome Biol.">
        <title>Structure and dynamics of the pan-genome of Streptococcus pneumoniae and closely related species.</title>
        <authorList>
            <person name="Donati C."/>
            <person name="Hiller N.L."/>
            <person name="Tettelin H."/>
            <person name="Muzzi A."/>
            <person name="Croucher N.J."/>
            <person name="Angiuoli S.V."/>
            <person name="Oggioni M."/>
            <person name="Dunning Hotopp J.C."/>
            <person name="Hu F.Z."/>
            <person name="Riley D.R."/>
            <person name="Covacci A."/>
            <person name="Mitchell T.J."/>
            <person name="Bentley S.D."/>
            <person name="Kilian M."/>
            <person name="Ehrlich G.D."/>
            <person name="Rappuoli R."/>
            <person name="Moxon E.R."/>
            <person name="Masignani V."/>
        </authorList>
    </citation>
    <scope>NUCLEOTIDE SEQUENCE [LARGE SCALE GENOMIC DNA]</scope>
    <source>
        <strain>JJA</strain>
    </source>
</reference>
<name>DEOB_STRZJ</name>